<organism>
    <name type="scientific">Methylorubrum extorquens (strain CM4 / NCIMB 13688)</name>
    <name type="common">Methylobacterium extorquens</name>
    <dbReference type="NCBI Taxonomy" id="440085"/>
    <lineage>
        <taxon>Bacteria</taxon>
        <taxon>Pseudomonadati</taxon>
        <taxon>Pseudomonadota</taxon>
        <taxon>Alphaproteobacteria</taxon>
        <taxon>Hyphomicrobiales</taxon>
        <taxon>Methylobacteriaceae</taxon>
        <taxon>Methylorubrum</taxon>
    </lineage>
</organism>
<feature type="chain" id="PRO_0000402754" description="3-aminoacrylate deaminase RutC">
    <location>
        <begin position="1"/>
        <end position="130"/>
    </location>
</feature>
<sequence>MPKTVVIPPGTGKPLAPYVPGTLADGVLYVSGTLPLDAEANVVHEGDAGAQTRHVLETIKGVVEAAGGSMDDVTFNHIFLKDWADYGAINAVYATYFPGEKPARYCIQCGLVKPTALVEIASVAHIGKPA</sequence>
<proteinExistence type="inferred from homology"/>
<gene>
    <name evidence="1" type="primary">rutC</name>
    <name type="ordered locus">Mchl_2055</name>
</gene>
<name>RUTC_METC4</name>
<dbReference type="EC" id="3.5.-.-" evidence="1"/>
<dbReference type="EMBL" id="CP001298">
    <property type="protein sequence ID" value="ACK82902.1"/>
    <property type="molecule type" value="Genomic_DNA"/>
</dbReference>
<dbReference type="RefSeq" id="WP_012253315.1">
    <property type="nucleotide sequence ID" value="NC_011757.1"/>
</dbReference>
<dbReference type="SMR" id="B7KWT5"/>
<dbReference type="GeneID" id="72989393"/>
<dbReference type="KEGG" id="mch:Mchl_2055"/>
<dbReference type="HOGENOM" id="CLU_100715_7_3_5"/>
<dbReference type="Proteomes" id="UP000002385">
    <property type="component" value="Chromosome"/>
</dbReference>
<dbReference type="GO" id="GO:0005829">
    <property type="term" value="C:cytosol"/>
    <property type="evidence" value="ECO:0007669"/>
    <property type="project" value="TreeGrafter"/>
</dbReference>
<dbReference type="GO" id="GO:0019239">
    <property type="term" value="F:deaminase activity"/>
    <property type="evidence" value="ECO:0007669"/>
    <property type="project" value="TreeGrafter"/>
</dbReference>
<dbReference type="GO" id="GO:0019740">
    <property type="term" value="P:nitrogen utilization"/>
    <property type="evidence" value="ECO:0007669"/>
    <property type="project" value="UniProtKB-UniRule"/>
</dbReference>
<dbReference type="GO" id="GO:0006212">
    <property type="term" value="P:uracil catabolic process"/>
    <property type="evidence" value="ECO:0007669"/>
    <property type="project" value="UniProtKB-UniRule"/>
</dbReference>
<dbReference type="CDD" id="cd00448">
    <property type="entry name" value="YjgF_YER057c_UK114_family"/>
    <property type="match status" value="1"/>
</dbReference>
<dbReference type="Gene3D" id="3.30.1330.40">
    <property type="entry name" value="RutC-like"/>
    <property type="match status" value="1"/>
</dbReference>
<dbReference type="HAMAP" id="MF_00831">
    <property type="entry name" value="RutC"/>
    <property type="match status" value="1"/>
</dbReference>
<dbReference type="InterPro" id="IPR019898">
    <property type="entry name" value="RutC"/>
</dbReference>
<dbReference type="InterPro" id="IPR035959">
    <property type="entry name" value="RutC-like_sf"/>
</dbReference>
<dbReference type="InterPro" id="IPR006175">
    <property type="entry name" value="YjgF/YER057c/UK114"/>
</dbReference>
<dbReference type="NCBIfam" id="TIGR03610">
    <property type="entry name" value="RutC"/>
    <property type="match status" value="1"/>
</dbReference>
<dbReference type="PANTHER" id="PTHR11803">
    <property type="entry name" value="2-IMINOBUTANOATE/2-IMINOPROPANOATE DEAMINASE RIDA"/>
    <property type="match status" value="1"/>
</dbReference>
<dbReference type="PANTHER" id="PTHR11803:SF58">
    <property type="entry name" value="PROTEIN HMF1-RELATED"/>
    <property type="match status" value="1"/>
</dbReference>
<dbReference type="Pfam" id="PF01042">
    <property type="entry name" value="Ribonuc_L-PSP"/>
    <property type="match status" value="1"/>
</dbReference>
<dbReference type="SUPFAM" id="SSF55298">
    <property type="entry name" value="YjgF-like"/>
    <property type="match status" value="1"/>
</dbReference>
<comment type="function">
    <text evidence="1">Involved in pyrimidine catabolism. Catalyzes the deamination of 3-aminoacrylate to malonic semialdehyde, a reaction that can also occur spontaneously. RutC may facilitate the reaction and modulate the metabolic fitness, rather than catalyzing essential functions.</text>
</comment>
<comment type="catalytic activity">
    <reaction evidence="1">
        <text>(Z)-3-aminoacrylate + H2O + H(+) = 3-oxopropanoate + NH4(+)</text>
        <dbReference type="Rhea" id="RHEA:34947"/>
        <dbReference type="ChEBI" id="CHEBI:15377"/>
        <dbReference type="ChEBI" id="CHEBI:15378"/>
        <dbReference type="ChEBI" id="CHEBI:28938"/>
        <dbReference type="ChEBI" id="CHEBI:33190"/>
        <dbReference type="ChEBI" id="CHEBI:59894"/>
    </reaction>
</comment>
<comment type="similarity">
    <text evidence="1">Belongs to the RutC family.</text>
</comment>
<keyword id="KW-0378">Hydrolase</keyword>
<evidence type="ECO:0000255" key="1">
    <source>
        <dbReference type="HAMAP-Rule" id="MF_00831"/>
    </source>
</evidence>
<reference key="1">
    <citation type="submission" date="2008-12" db="EMBL/GenBank/DDBJ databases">
        <title>Complete sequence of chromosome of Methylobacterium chloromethanicum CM4.</title>
        <authorList>
            <consortium name="US DOE Joint Genome Institute"/>
            <person name="Lucas S."/>
            <person name="Copeland A."/>
            <person name="Lapidus A."/>
            <person name="Glavina del Rio T."/>
            <person name="Dalin E."/>
            <person name="Tice H."/>
            <person name="Bruce D."/>
            <person name="Goodwin L."/>
            <person name="Pitluck S."/>
            <person name="Chertkov O."/>
            <person name="Brettin T."/>
            <person name="Detter J.C."/>
            <person name="Han C."/>
            <person name="Larimer F."/>
            <person name="Land M."/>
            <person name="Hauser L."/>
            <person name="Kyrpides N."/>
            <person name="Mikhailova N."/>
            <person name="Marx C."/>
            <person name="Richardson P."/>
        </authorList>
    </citation>
    <scope>NUCLEOTIDE SEQUENCE [LARGE SCALE GENOMIC DNA]</scope>
    <source>
        <strain>CM4 / NCIMB 13688</strain>
    </source>
</reference>
<protein>
    <recommendedName>
        <fullName evidence="1">3-aminoacrylate deaminase RutC</fullName>
        <shortName evidence="1">3-AA deaminase</shortName>
        <ecNumber evidence="1">3.5.-.-</ecNumber>
    </recommendedName>
</protein>
<accession>B7KWT5</accession>